<proteinExistence type="inferred from homology"/>
<comment type="function">
    <text evidence="1">One of the primary rRNA binding proteins, it binds directly to 16S rRNA where it helps nucleate assembly of the platform of the 30S subunit by binding and bridging several RNA helices of the 16S rRNA.</text>
</comment>
<comment type="function">
    <text evidence="1">Forms an intersubunit bridge (bridge B4) with the 23S rRNA of the 50S subunit in the ribosome.</text>
</comment>
<comment type="subunit">
    <text evidence="1">Part of the 30S ribosomal subunit. Forms a bridge to the 50S subunit in the 70S ribosome, contacting the 23S rRNA.</text>
</comment>
<comment type="similarity">
    <text evidence="1">Belongs to the universal ribosomal protein uS15 family.</text>
</comment>
<reference key="1">
    <citation type="submission" date="2009-01" db="EMBL/GenBank/DDBJ databases">
        <title>Complete sequence of Chloroflexus sp. Y-400-fl.</title>
        <authorList>
            <consortium name="US DOE Joint Genome Institute"/>
            <person name="Lucas S."/>
            <person name="Copeland A."/>
            <person name="Lapidus A."/>
            <person name="Glavina del Rio T."/>
            <person name="Dalin E."/>
            <person name="Tice H."/>
            <person name="Bruce D."/>
            <person name="Goodwin L."/>
            <person name="Pitluck S."/>
            <person name="Sims D."/>
            <person name="Kiss H."/>
            <person name="Brettin T."/>
            <person name="Detter J.C."/>
            <person name="Han C."/>
            <person name="Larimer F."/>
            <person name="Land M."/>
            <person name="Hauser L."/>
            <person name="Kyrpides N."/>
            <person name="Ovchinnikova G."/>
            <person name="Bryant D.A."/>
            <person name="Richardson P."/>
        </authorList>
    </citation>
    <scope>NUCLEOTIDE SEQUENCE [LARGE SCALE GENOMIC DNA]</scope>
    <source>
        <strain>ATCC 29364 / DSM 637 / Y-400-fl</strain>
    </source>
</reference>
<sequence length="89" mass="10673">MALEKEEKSQIINGYQIHETDTGSPEVQVALLTERINQLIEHLRVHTHDHHSRRGLLKLVGRRRRLLNYLQSKDRERYRNVINRLGLRR</sequence>
<feature type="chain" id="PRO_1000166411" description="Small ribosomal subunit protein uS15">
    <location>
        <begin position="1"/>
        <end position="89"/>
    </location>
</feature>
<evidence type="ECO:0000255" key="1">
    <source>
        <dbReference type="HAMAP-Rule" id="MF_01343"/>
    </source>
</evidence>
<evidence type="ECO:0000305" key="2"/>
<name>RS15_CHLSY</name>
<accession>B9LH02</accession>
<protein>
    <recommendedName>
        <fullName evidence="1">Small ribosomal subunit protein uS15</fullName>
    </recommendedName>
    <alternativeName>
        <fullName evidence="2">30S ribosomal protein S15</fullName>
    </alternativeName>
</protein>
<keyword id="KW-0687">Ribonucleoprotein</keyword>
<keyword id="KW-0689">Ribosomal protein</keyword>
<keyword id="KW-0694">RNA-binding</keyword>
<keyword id="KW-0699">rRNA-binding</keyword>
<organism>
    <name type="scientific">Chloroflexus aurantiacus (strain ATCC 29364 / DSM 637 / Y-400-fl)</name>
    <dbReference type="NCBI Taxonomy" id="480224"/>
    <lineage>
        <taxon>Bacteria</taxon>
        <taxon>Bacillati</taxon>
        <taxon>Chloroflexota</taxon>
        <taxon>Chloroflexia</taxon>
        <taxon>Chloroflexales</taxon>
        <taxon>Chloroflexineae</taxon>
        <taxon>Chloroflexaceae</taxon>
        <taxon>Chloroflexus</taxon>
    </lineage>
</organism>
<gene>
    <name evidence="1" type="primary">rpsO</name>
    <name type="ordered locus">Chy400_2207</name>
</gene>
<dbReference type="EMBL" id="CP001364">
    <property type="protein sequence ID" value="ACM53604.1"/>
    <property type="molecule type" value="Genomic_DNA"/>
</dbReference>
<dbReference type="SMR" id="B9LH02"/>
<dbReference type="KEGG" id="chl:Chy400_2207"/>
<dbReference type="HOGENOM" id="CLU_148518_0_0_0"/>
<dbReference type="OrthoDB" id="9799262at2"/>
<dbReference type="GO" id="GO:0022627">
    <property type="term" value="C:cytosolic small ribosomal subunit"/>
    <property type="evidence" value="ECO:0007669"/>
    <property type="project" value="TreeGrafter"/>
</dbReference>
<dbReference type="GO" id="GO:0019843">
    <property type="term" value="F:rRNA binding"/>
    <property type="evidence" value="ECO:0007669"/>
    <property type="project" value="UniProtKB-UniRule"/>
</dbReference>
<dbReference type="GO" id="GO:0003735">
    <property type="term" value="F:structural constituent of ribosome"/>
    <property type="evidence" value="ECO:0007669"/>
    <property type="project" value="InterPro"/>
</dbReference>
<dbReference type="GO" id="GO:0006412">
    <property type="term" value="P:translation"/>
    <property type="evidence" value="ECO:0007669"/>
    <property type="project" value="UniProtKB-UniRule"/>
</dbReference>
<dbReference type="CDD" id="cd00353">
    <property type="entry name" value="Ribosomal_S15p_S13e"/>
    <property type="match status" value="1"/>
</dbReference>
<dbReference type="FunFam" id="1.10.287.10:FF:000002">
    <property type="entry name" value="30S ribosomal protein S15"/>
    <property type="match status" value="1"/>
</dbReference>
<dbReference type="Gene3D" id="6.10.250.3130">
    <property type="match status" value="1"/>
</dbReference>
<dbReference type="Gene3D" id="1.10.287.10">
    <property type="entry name" value="S15/NS1, RNA-binding"/>
    <property type="match status" value="1"/>
</dbReference>
<dbReference type="HAMAP" id="MF_01343_B">
    <property type="entry name" value="Ribosomal_uS15_B"/>
    <property type="match status" value="1"/>
</dbReference>
<dbReference type="InterPro" id="IPR000589">
    <property type="entry name" value="Ribosomal_uS15"/>
</dbReference>
<dbReference type="InterPro" id="IPR005290">
    <property type="entry name" value="Ribosomal_uS15_bac-type"/>
</dbReference>
<dbReference type="InterPro" id="IPR009068">
    <property type="entry name" value="uS15_NS1_RNA-bd_sf"/>
</dbReference>
<dbReference type="NCBIfam" id="TIGR00952">
    <property type="entry name" value="S15_bact"/>
    <property type="match status" value="1"/>
</dbReference>
<dbReference type="PANTHER" id="PTHR23321">
    <property type="entry name" value="RIBOSOMAL PROTEIN S15, BACTERIAL AND ORGANELLAR"/>
    <property type="match status" value="1"/>
</dbReference>
<dbReference type="PANTHER" id="PTHR23321:SF26">
    <property type="entry name" value="SMALL RIBOSOMAL SUBUNIT PROTEIN US15M"/>
    <property type="match status" value="1"/>
</dbReference>
<dbReference type="Pfam" id="PF00312">
    <property type="entry name" value="Ribosomal_S15"/>
    <property type="match status" value="1"/>
</dbReference>
<dbReference type="SMART" id="SM01387">
    <property type="entry name" value="Ribosomal_S15"/>
    <property type="match status" value="1"/>
</dbReference>
<dbReference type="SUPFAM" id="SSF47060">
    <property type="entry name" value="S15/NS1 RNA-binding domain"/>
    <property type="match status" value="1"/>
</dbReference>
<dbReference type="PROSITE" id="PS00362">
    <property type="entry name" value="RIBOSOMAL_S15"/>
    <property type="match status" value="1"/>
</dbReference>